<organism>
    <name type="scientific">Methanocaldococcus jannaschii (strain ATCC 43067 / DSM 2661 / JAL-1 / JCM 10045 / NBRC 100440)</name>
    <name type="common">Methanococcus jannaschii</name>
    <dbReference type="NCBI Taxonomy" id="243232"/>
    <lineage>
        <taxon>Archaea</taxon>
        <taxon>Methanobacteriati</taxon>
        <taxon>Methanobacteriota</taxon>
        <taxon>Methanomada group</taxon>
        <taxon>Methanococci</taxon>
        <taxon>Methanococcales</taxon>
        <taxon>Methanocaldococcaceae</taxon>
        <taxon>Methanocaldococcus</taxon>
    </lineage>
</organism>
<accession>Q58152</accession>
<name>Y742_METJA</name>
<evidence type="ECO:0000305" key="1"/>
<evidence type="ECO:0007829" key="2">
    <source>
        <dbReference type="PDB" id="3D7I"/>
    </source>
</evidence>
<keyword id="KW-0002">3D-structure</keyword>
<keyword id="KW-1185">Reference proteome</keyword>
<sequence length="104" mass="11703">MKNEVFFGEGMKVVKEKYPDLYDIIVKLNDTVFTGKTLDYKTQKLIAIGIVASRCDEVAIEKQMKSAMKELGITKEEIADVLRVVLLTSGMPAFTKAMKILEKL</sequence>
<proteinExistence type="evidence at protein level"/>
<protein>
    <recommendedName>
        <fullName>Uncharacterized protein MJ0742</fullName>
    </recommendedName>
</protein>
<feature type="chain" id="PRO_0000107011" description="Uncharacterized protein MJ0742">
    <location>
        <begin position="1"/>
        <end position="104"/>
    </location>
</feature>
<feature type="helix" evidence="2">
    <location>
        <begin position="9"/>
        <end position="17"/>
    </location>
</feature>
<feature type="helix" evidence="2">
    <location>
        <begin position="19"/>
        <end position="32"/>
    </location>
</feature>
<feature type="strand" evidence="2">
    <location>
        <begin position="36"/>
        <end position="38"/>
    </location>
</feature>
<feature type="helix" evidence="2">
    <location>
        <begin position="40"/>
        <end position="52"/>
    </location>
</feature>
<feature type="helix" evidence="2">
    <location>
        <begin position="57"/>
        <end position="71"/>
    </location>
</feature>
<feature type="helix" evidence="2">
    <location>
        <begin position="75"/>
        <end position="89"/>
    </location>
</feature>
<feature type="helix" evidence="2">
    <location>
        <begin position="91"/>
        <end position="103"/>
    </location>
</feature>
<reference key="1">
    <citation type="journal article" date="1996" name="Science">
        <title>Complete genome sequence of the methanogenic archaeon, Methanococcus jannaschii.</title>
        <authorList>
            <person name="Bult C.J."/>
            <person name="White O."/>
            <person name="Olsen G.J."/>
            <person name="Zhou L."/>
            <person name="Fleischmann R.D."/>
            <person name="Sutton G.G."/>
            <person name="Blake J.A."/>
            <person name="FitzGerald L.M."/>
            <person name="Clayton R.A."/>
            <person name="Gocayne J.D."/>
            <person name="Kerlavage A.R."/>
            <person name="Dougherty B.A."/>
            <person name="Tomb J.-F."/>
            <person name="Adams M.D."/>
            <person name="Reich C.I."/>
            <person name="Overbeek R."/>
            <person name="Kirkness E.F."/>
            <person name="Weinstock K.G."/>
            <person name="Merrick J.M."/>
            <person name="Glodek A."/>
            <person name="Scott J.L."/>
            <person name="Geoghagen N.S.M."/>
            <person name="Weidman J.F."/>
            <person name="Fuhrmann J.L."/>
            <person name="Nguyen D."/>
            <person name="Utterback T.R."/>
            <person name="Kelley J.M."/>
            <person name="Peterson J.D."/>
            <person name="Sadow P.W."/>
            <person name="Hanna M.C."/>
            <person name="Cotton M.D."/>
            <person name="Roberts K.M."/>
            <person name="Hurst M.A."/>
            <person name="Kaine B.P."/>
            <person name="Borodovsky M."/>
            <person name="Klenk H.-P."/>
            <person name="Fraser C.M."/>
            <person name="Smith H.O."/>
            <person name="Woese C.R."/>
            <person name="Venter J.C."/>
        </authorList>
    </citation>
    <scope>NUCLEOTIDE SEQUENCE [LARGE SCALE GENOMIC DNA]</scope>
    <source>
        <strain>ATCC 43067 / DSM 2661 / JAL-1 / JCM 10045 / NBRC 100440</strain>
    </source>
</reference>
<gene>
    <name type="ordered locus">MJ0742</name>
</gene>
<comment type="similarity">
    <text evidence="1">To M.jannaschii MJ1511.</text>
</comment>
<dbReference type="EMBL" id="L77117">
    <property type="protein sequence ID" value="AAB98736.1"/>
    <property type="molecule type" value="Genomic_DNA"/>
</dbReference>
<dbReference type="PIR" id="F64392">
    <property type="entry name" value="F64392"/>
</dbReference>
<dbReference type="RefSeq" id="WP_010870247.1">
    <property type="nucleotide sequence ID" value="NC_000909.1"/>
</dbReference>
<dbReference type="PDB" id="3D7I">
    <property type="method" value="X-ray"/>
    <property type="resolution" value="1.75 A"/>
    <property type="chains" value="A/B/C=1-104"/>
</dbReference>
<dbReference type="PDBsum" id="3D7I"/>
<dbReference type="SMR" id="Q58152"/>
<dbReference type="FunCoup" id="Q58152">
    <property type="interactions" value="1"/>
</dbReference>
<dbReference type="STRING" id="243232.MJ_0742"/>
<dbReference type="PaxDb" id="243232-MJ_0742"/>
<dbReference type="EnsemblBacteria" id="AAB98736">
    <property type="protein sequence ID" value="AAB98736"/>
    <property type="gene ID" value="MJ_0742"/>
</dbReference>
<dbReference type="GeneID" id="1451619"/>
<dbReference type="KEGG" id="mja:MJ_0742"/>
<dbReference type="eggNOG" id="arCOG02148">
    <property type="taxonomic scope" value="Archaea"/>
</dbReference>
<dbReference type="HOGENOM" id="CLU_137228_5_0_2"/>
<dbReference type="InParanoid" id="Q58152"/>
<dbReference type="OrthoDB" id="73788at2157"/>
<dbReference type="PhylomeDB" id="Q58152"/>
<dbReference type="EvolutionaryTrace" id="Q58152"/>
<dbReference type="Proteomes" id="UP000000805">
    <property type="component" value="Chromosome"/>
</dbReference>
<dbReference type="GO" id="GO:0016491">
    <property type="term" value="F:oxidoreductase activity"/>
    <property type="evidence" value="ECO:0000318"/>
    <property type="project" value="GO_Central"/>
</dbReference>
<dbReference type="GO" id="GO:0051920">
    <property type="term" value="F:peroxiredoxin activity"/>
    <property type="evidence" value="ECO:0007669"/>
    <property type="project" value="InterPro"/>
</dbReference>
<dbReference type="Gene3D" id="1.20.1290.10">
    <property type="entry name" value="AhpD-like"/>
    <property type="match status" value="1"/>
</dbReference>
<dbReference type="InterPro" id="IPR029032">
    <property type="entry name" value="AhpD-like"/>
</dbReference>
<dbReference type="InterPro" id="IPR003779">
    <property type="entry name" value="CMD-like"/>
</dbReference>
<dbReference type="PANTHER" id="PTHR33930">
    <property type="entry name" value="ALKYL HYDROPEROXIDE REDUCTASE AHPD"/>
    <property type="match status" value="1"/>
</dbReference>
<dbReference type="PANTHER" id="PTHR33930:SF2">
    <property type="entry name" value="BLR3452 PROTEIN"/>
    <property type="match status" value="1"/>
</dbReference>
<dbReference type="Pfam" id="PF02627">
    <property type="entry name" value="CMD"/>
    <property type="match status" value="1"/>
</dbReference>
<dbReference type="SUPFAM" id="SSF69118">
    <property type="entry name" value="AhpD-like"/>
    <property type="match status" value="1"/>
</dbReference>